<name>END8_ECO24</name>
<accession>A7ZJ95</accession>
<dbReference type="EC" id="3.2.2.-" evidence="1"/>
<dbReference type="EC" id="4.2.99.18" evidence="1"/>
<dbReference type="EMBL" id="CP000800">
    <property type="protein sequence ID" value="ABV16788.1"/>
    <property type="molecule type" value="Genomic_DNA"/>
</dbReference>
<dbReference type="RefSeq" id="WP_001114025.1">
    <property type="nucleotide sequence ID" value="NC_009801.1"/>
</dbReference>
<dbReference type="SMR" id="A7ZJ95"/>
<dbReference type="GeneID" id="75205546"/>
<dbReference type="KEGG" id="ecw:EcE24377A_0740"/>
<dbReference type="HOGENOM" id="CLU_038423_2_2_6"/>
<dbReference type="Proteomes" id="UP000001122">
    <property type="component" value="Chromosome"/>
</dbReference>
<dbReference type="GO" id="GO:0140078">
    <property type="term" value="F:class I DNA-(apurinic or apyrimidinic site) endonuclease activity"/>
    <property type="evidence" value="ECO:0007669"/>
    <property type="project" value="UniProtKB-EC"/>
</dbReference>
<dbReference type="GO" id="GO:0003684">
    <property type="term" value="F:damaged DNA binding"/>
    <property type="evidence" value="ECO:0007669"/>
    <property type="project" value="InterPro"/>
</dbReference>
<dbReference type="GO" id="GO:0000703">
    <property type="term" value="F:oxidized pyrimidine nucleobase lesion DNA N-glycosylase activity"/>
    <property type="evidence" value="ECO:0007669"/>
    <property type="project" value="UniProtKB-UniRule"/>
</dbReference>
<dbReference type="GO" id="GO:0008270">
    <property type="term" value="F:zinc ion binding"/>
    <property type="evidence" value="ECO:0007669"/>
    <property type="project" value="UniProtKB-UniRule"/>
</dbReference>
<dbReference type="GO" id="GO:0006284">
    <property type="term" value="P:base-excision repair"/>
    <property type="evidence" value="ECO:0007669"/>
    <property type="project" value="InterPro"/>
</dbReference>
<dbReference type="CDD" id="cd08965">
    <property type="entry name" value="EcNei-like_N"/>
    <property type="match status" value="1"/>
</dbReference>
<dbReference type="FunFam" id="1.10.8.50:FF:000005">
    <property type="entry name" value="Endonuclease 8"/>
    <property type="match status" value="1"/>
</dbReference>
<dbReference type="FunFam" id="3.20.190.10:FF:000002">
    <property type="entry name" value="Endonuclease 8"/>
    <property type="match status" value="1"/>
</dbReference>
<dbReference type="Gene3D" id="1.10.8.50">
    <property type="match status" value="1"/>
</dbReference>
<dbReference type="Gene3D" id="3.20.190.10">
    <property type="entry name" value="MutM-like, N-terminal"/>
    <property type="match status" value="1"/>
</dbReference>
<dbReference type="HAMAP" id="MF_01253">
    <property type="entry name" value="Endonuclease_8"/>
    <property type="match status" value="1"/>
</dbReference>
<dbReference type="InterPro" id="IPR015886">
    <property type="entry name" value="DNA_glyclase/AP_lyase_DNA-bd"/>
</dbReference>
<dbReference type="InterPro" id="IPR015887">
    <property type="entry name" value="DNA_glyclase_Znf_dom_DNA_BS"/>
</dbReference>
<dbReference type="InterPro" id="IPR044091">
    <property type="entry name" value="EcNei-like_N"/>
</dbReference>
<dbReference type="InterPro" id="IPR023713">
    <property type="entry name" value="Endonuclease-VIII"/>
</dbReference>
<dbReference type="InterPro" id="IPR012319">
    <property type="entry name" value="FPG_cat"/>
</dbReference>
<dbReference type="InterPro" id="IPR035937">
    <property type="entry name" value="MutM-like_N-ter"/>
</dbReference>
<dbReference type="InterPro" id="IPR010979">
    <property type="entry name" value="Ribosomal_uS13-like_H2TH"/>
</dbReference>
<dbReference type="InterPro" id="IPR000214">
    <property type="entry name" value="Znf_DNA_glyclase/AP_lyase"/>
</dbReference>
<dbReference type="InterPro" id="IPR010663">
    <property type="entry name" value="Znf_FPG/IleRS"/>
</dbReference>
<dbReference type="NCBIfam" id="NF007763">
    <property type="entry name" value="PRK10445.1"/>
    <property type="match status" value="1"/>
</dbReference>
<dbReference type="PANTHER" id="PTHR42697">
    <property type="entry name" value="ENDONUCLEASE 8"/>
    <property type="match status" value="1"/>
</dbReference>
<dbReference type="PANTHER" id="PTHR42697:SF1">
    <property type="entry name" value="ENDONUCLEASE 8"/>
    <property type="match status" value="1"/>
</dbReference>
<dbReference type="Pfam" id="PF01149">
    <property type="entry name" value="Fapy_DNA_glyco"/>
    <property type="match status" value="1"/>
</dbReference>
<dbReference type="Pfam" id="PF06831">
    <property type="entry name" value="H2TH"/>
    <property type="match status" value="1"/>
</dbReference>
<dbReference type="Pfam" id="PF06827">
    <property type="entry name" value="zf-FPG_IleRS"/>
    <property type="match status" value="1"/>
</dbReference>
<dbReference type="SMART" id="SM00898">
    <property type="entry name" value="Fapy_DNA_glyco"/>
    <property type="match status" value="1"/>
</dbReference>
<dbReference type="SMART" id="SM01232">
    <property type="entry name" value="H2TH"/>
    <property type="match status" value="1"/>
</dbReference>
<dbReference type="SUPFAM" id="SSF57716">
    <property type="entry name" value="Glucocorticoid receptor-like (DNA-binding domain)"/>
    <property type="match status" value="1"/>
</dbReference>
<dbReference type="SUPFAM" id="SSF81624">
    <property type="entry name" value="N-terminal domain of MutM-like DNA repair proteins"/>
    <property type="match status" value="1"/>
</dbReference>
<dbReference type="SUPFAM" id="SSF46946">
    <property type="entry name" value="S13-like H2TH domain"/>
    <property type="match status" value="1"/>
</dbReference>
<dbReference type="PROSITE" id="PS51068">
    <property type="entry name" value="FPG_CAT"/>
    <property type="match status" value="1"/>
</dbReference>
<dbReference type="PROSITE" id="PS01242">
    <property type="entry name" value="ZF_FPG_1"/>
    <property type="match status" value="1"/>
</dbReference>
<dbReference type="PROSITE" id="PS51066">
    <property type="entry name" value="ZF_FPG_2"/>
    <property type="match status" value="1"/>
</dbReference>
<sequence length="263" mass="29890">MPEGPEIRRAADNLEAAIKGKPLTDVWFAFPQLKTYQSQLIGQHVTHVETRGKALLTHFSNDLTLYSHNQLYGVWRVVDTGEEPQTTRVLRVKLQTADKTILLYSASDIEMLRPEQLTTHPFLQRVGPDVLDPNLTPEVVKERLLSPRFRNRQFAGLLLDQAFLAGLGNYLRVEILWQVGLTGNHKAKDLNAAQLDALAHALLEIPRFSYATRGQVDENKHHGALFRFKVFHRDGELCERCGGIIEKTTLSSRPFYWCPGCQH</sequence>
<gene>
    <name evidence="1" type="primary">nei</name>
    <name type="ordered locus">EcE24377A_0740</name>
</gene>
<proteinExistence type="inferred from homology"/>
<protein>
    <recommendedName>
        <fullName evidence="1">Endonuclease 8</fullName>
    </recommendedName>
    <alternativeName>
        <fullName evidence="1">DNA glycosylase/AP lyase Nei</fullName>
        <ecNumber evidence="1">3.2.2.-</ecNumber>
        <ecNumber evidence="1">4.2.99.18</ecNumber>
    </alternativeName>
    <alternativeName>
        <fullName evidence="1">DNA-(apurinic or apyrimidinic site) lyase Nei</fullName>
    </alternativeName>
    <alternativeName>
        <fullName evidence="1">Endonuclease VIII</fullName>
    </alternativeName>
</protein>
<comment type="function">
    <text evidence="1">Involved in base excision repair of DNA damaged by oxidation or by mutagenic agents. Acts as a DNA glycosylase that recognizes and removes damaged bases. Has a preference for oxidized pyrimidines, such as thymine glycol, 5,6-dihydrouracil and 5,6-dihydrothymine. Has AP (apurinic/apyrimidinic) lyase activity and introduces nicks in the DNA strand. Cleaves the DNA backbone by beta-delta elimination to generate a single-strand break at the site of the removed base with both 3'- and 5'-phosphates.</text>
</comment>
<comment type="catalytic activity">
    <reaction evidence="1">
        <text>2'-deoxyribonucleotide-(2'-deoxyribose 5'-phosphate)-2'-deoxyribonucleotide-DNA = a 3'-end 2'-deoxyribonucleotide-(2,3-dehydro-2,3-deoxyribose 5'-phosphate)-DNA + a 5'-end 5'-phospho-2'-deoxyribonucleoside-DNA + H(+)</text>
        <dbReference type="Rhea" id="RHEA:66592"/>
        <dbReference type="Rhea" id="RHEA-COMP:13180"/>
        <dbReference type="Rhea" id="RHEA-COMP:16897"/>
        <dbReference type="Rhea" id="RHEA-COMP:17067"/>
        <dbReference type="ChEBI" id="CHEBI:15378"/>
        <dbReference type="ChEBI" id="CHEBI:136412"/>
        <dbReference type="ChEBI" id="CHEBI:157695"/>
        <dbReference type="ChEBI" id="CHEBI:167181"/>
        <dbReference type="EC" id="4.2.99.18"/>
    </reaction>
</comment>
<comment type="cofactor">
    <cofactor evidence="1">
        <name>Zn(2+)</name>
        <dbReference type="ChEBI" id="CHEBI:29105"/>
    </cofactor>
    <text evidence="1">Binds 1 zinc ion per subunit.</text>
</comment>
<comment type="similarity">
    <text evidence="1">Belongs to the FPG family.</text>
</comment>
<keyword id="KW-0227">DNA damage</keyword>
<keyword id="KW-0234">DNA repair</keyword>
<keyword id="KW-0238">DNA-binding</keyword>
<keyword id="KW-0326">Glycosidase</keyword>
<keyword id="KW-0378">Hydrolase</keyword>
<keyword id="KW-0456">Lyase</keyword>
<keyword id="KW-0479">Metal-binding</keyword>
<keyword id="KW-0511">Multifunctional enzyme</keyword>
<keyword id="KW-1185">Reference proteome</keyword>
<keyword id="KW-0862">Zinc</keyword>
<keyword id="KW-0863">Zinc-finger</keyword>
<reference key="1">
    <citation type="journal article" date="2008" name="J. Bacteriol.">
        <title>The pangenome structure of Escherichia coli: comparative genomic analysis of E. coli commensal and pathogenic isolates.</title>
        <authorList>
            <person name="Rasko D.A."/>
            <person name="Rosovitz M.J."/>
            <person name="Myers G.S.A."/>
            <person name="Mongodin E.F."/>
            <person name="Fricke W.F."/>
            <person name="Gajer P."/>
            <person name="Crabtree J."/>
            <person name="Sebaihia M."/>
            <person name="Thomson N.R."/>
            <person name="Chaudhuri R."/>
            <person name="Henderson I.R."/>
            <person name="Sperandio V."/>
            <person name="Ravel J."/>
        </authorList>
    </citation>
    <scope>NUCLEOTIDE SEQUENCE [LARGE SCALE GENOMIC DNA]</scope>
    <source>
        <strain>E24377A / ETEC</strain>
    </source>
</reference>
<feature type="initiator methionine" description="Removed" evidence="1">
    <location>
        <position position="1"/>
    </location>
</feature>
<feature type="chain" id="PRO_1000067199" description="Endonuclease 8">
    <location>
        <begin position="2"/>
        <end position="263"/>
    </location>
</feature>
<feature type="zinc finger region" description="FPG-type" evidence="1">
    <location>
        <begin position="229"/>
        <end position="263"/>
    </location>
</feature>
<feature type="active site" description="Schiff-base intermediate with DNA" evidence="1">
    <location>
        <position position="2"/>
    </location>
</feature>
<feature type="active site" description="Proton donor" evidence="1">
    <location>
        <position position="3"/>
    </location>
</feature>
<feature type="active site" description="Proton donor; for beta-elimination activity" evidence="1">
    <location>
        <position position="53"/>
    </location>
</feature>
<feature type="active site" description="Proton donor; for delta-elimination activity" evidence="1">
    <location>
        <position position="253"/>
    </location>
</feature>
<feature type="binding site" evidence="1">
    <location>
        <position position="70"/>
    </location>
    <ligand>
        <name>DNA</name>
        <dbReference type="ChEBI" id="CHEBI:16991"/>
    </ligand>
</feature>
<feature type="binding site" evidence="1">
    <location>
        <position position="125"/>
    </location>
    <ligand>
        <name>DNA</name>
        <dbReference type="ChEBI" id="CHEBI:16991"/>
    </ligand>
</feature>
<feature type="binding site" evidence="1">
    <location>
        <position position="169"/>
    </location>
    <ligand>
        <name>DNA</name>
        <dbReference type="ChEBI" id="CHEBI:16991"/>
    </ligand>
</feature>
<organism>
    <name type="scientific">Escherichia coli O139:H28 (strain E24377A / ETEC)</name>
    <dbReference type="NCBI Taxonomy" id="331111"/>
    <lineage>
        <taxon>Bacteria</taxon>
        <taxon>Pseudomonadati</taxon>
        <taxon>Pseudomonadota</taxon>
        <taxon>Gammaproteobacteria</taxon>
        <taxon>Enterobacterales</taxon>
        <taxon>Enterobacteriaceae</taxon>
        <taxon>Escherichia</taxon>
    </lineage>
</organism>
<evidence type="ECO:0000255" key="1">
    <source>
        <dbReference type="HAMAP-Rule" id="MF_01253"/>
    </source>
</evidence>